<reference key="1">
    <citation type="journal article" date="2005" name="Nat. Biotechnol.">
        <title>Complete genome sequence of the acetic acid bacterium Gluconobacter oxydans.</title>
        <authorList>
            <person name="Prust C."/>
            <person name="Hoffmeister M."/>
            <person name="Liesegang H."/>
            <person name="Wiezer A."/>
            <person name="Fricke W.F."/>
            <person name="Ehrenreich A."/>
            <person name="Gottschalk G."/>
            <person name="Deppenmeier U."/>
        </authorList>
    </citation>
    <scope>NUCLEOTIDE SEQUENCE [LARGE SCALE GENOMIC DNA]</scope>
    <source>
        <strain>621H</strain>
    </source>
</reference>
<feature type="chain" id="PRO_1000164002" description="DNA polymerase IV">
    <location>
        <begin position="1"/>
        <end position="356"/>
    </location>
</feature>
<feature type="domain" description="UmuC" evidence="1">
    <location>
        <begin position="6"/>
        <end position="186"/>
    </location>
</feature>
<feature type="active site" evidence="1">
    <location>
        <position position="105"/>
    </location>
</feature>
<feature type="binding site" evidence="1">
    <location>
        <position position="10"/>
    </location>
    <ligand>
        <name>Mg(2+)</name>
        <dbReference type="ChEBI" id="CHEBI:18420"/>
    </ligand>
</feature>
<feature type="binding site" evidence="1">
    <location>
        <position position="104"/>
    </location>
    <ligand>
        <name>Mg(2+)</name>
        <dbReference type="ChEBI" id="CHEBI:18420"/>
    </ligand>
</feature>
<feature type="site" description="Substrate discrimination" evidence="1">
    <location>
        <position position="15"/>
    </location>
</feature>
<protein>
    <recommendedName>
        <fullName evidence="1">DNA polymerase IV</fullName>
        <shortName evidence="1">Pol IV</shortName>
        <ecNumber evidence="1">2.7.7.7</ecNumber>
    </recommendedName>
</protein>
<gene>
    <name evidence="1" type="primary">dinB</name>
    <name type="ordered locus">GOX0844</name>
</gene>
<organism>
    <name type="scientific">Gluconobacter oxydans (strain 621H)</name>
    <name type="common">Gluconobacter suboxydans</name>
    <dbReference type="NCBI Taxonomy" id="290633"/>
    <lineage>
        <taxon>Bacteria</taxon>
        <taxon>Pseudomonadati</taxon>
        <taxon>Pseudomonadota</taxon>
        <taxon>Alphaproteobacteria</taxon>
        <taxon>Acetobacterales</taxon>
        <taxon>Acetobacteraceae</taxon>
        <taxon>Gluconobacter</taxon>
    </lineage>
</organism>
<comment type="function">
    <text evidence="1">Poorly processive, error-prone DNA polymerase involved in untargeted mutagenesis. Copies undamaged DNA at stalled replication forks, which arise in vivo from mismatched or misaligned primer ends. These misaligned primers can be extended by PolIV. Exhibits no 3'-5' exonuclease (proofreading) activity. May be involved in translesional synthesis, in conjunction with the beta clamp from PolIII.</text>
</comment>
<comment type="catalytic activity">
    <reaction evidence="1">
        <text>DNA(n) + a 2'-deoxyribonucleoside 5'-triphosphate = DNA(n+1) + diphosphate</text>
        <dbReference type="Rhea" id="RHEA:22508"/>
        <dbReference type="Rhea" id="RHEA-COMP:17339"/>
        <dbReference type="Rhea" id="RHEA-COMP:17340"/>
        <dbReference type="ChEBI" id="CHEBI:33019"/>
        <dbReference type="ChEBI" id="CHEBI:61560"/>
        <dbReference type="ChEBI" id="CHEBI:173112"/>
        <dbReference type="EC" id="2.7.7.7"/>
    </reaction>
</comment>
<comment type="cofactor">
    <cofactor evidence="1">
        <name>Mg(2+)</name>
        <dbReference type="ChEBI" id="CHEBI:18420"/>
    </cofactor>
    <text evidence="1">Binds 2 magnesium ions per subunit.</text>
</comment>
<comment type="subunit">
    <text evidence="1">Monomer.</text>
</comment>
<comment type="subcellular location">
    <subcellularLocation>
        <location evidence="1">Cytoplasm</location>
    </subcellularLocation>
</comment>
<comment type="similarity">
    <text evidence="1">Belongs to the DNA polymerase type-Y family.</text>
</comment>
<sequence length="356" mass="39289">MEQRRIVHIDMDAFYASVKQRDDPSLRGRPLAVGRGEARGVVAAASYEARRFGVRSAMPSVTAKRLCPELLFVPARFDVYRSVSAQIHDIFSRYTPLIQPLSLDEAYLDLTDHLGAYGSATLVADRIRADIHAETGLTASAGVSYNRFLAKLASDYRKPDGLFVITPAMGPEFVAALPVDAFHGIGPAMARKMRALGIETGADLRERDIETLTRHFGKAATFYYGISRGIDHRPVVVNRERKSLGTEQTYLRDLTSEADAHQALTQIAATLWGSAQRRQLQARTVTLKVKYADFRQITRARTLSAPVPSEEVLLETGQSLMAPLFPFVPGVRLLGLTLSGFHAAESPPCDQMELLF</sequence>
<name>DPO4_GLUOX</name>
<dbReference type="EC" id="2.7.7.7" evidence="1"/>
<dbReference type="EMBL" id="CP000009">
    <property type="protein sequence ID" value="AAW60618.1"/>
    <property type="molecule type" value="Genomic_DNA"/>
</dbReference>
<dbReference type="RefSeq" id="WP_011252414.1">
    <property type="nucleotide sequence ID" value="NC_006677.1"/>
</dbReference>
<dbReference type="SMR" id="Q5FSM8"/>
<dbReference type="STRING" id="290633.GOX0844"/>
<dbReference type="KEGG" id="gox:GOX0844"/>
<dbReference type="eggNOG" id="COG0389">
    <property type="taxonomic scope" value="Bacteria"/>
</dbReference>
<dbReference type="HOGENOM" id="CLU_012348_1_2_5"/>
<dbReference type="Proteomes" id="UP000006375">
    <property type="component" value="Chromosome"/>
</dbReference>
<dbReference type="GO" id="GO:0005829">
    <property type="term" value="C:cytosol"/>
    <property type="evidence" value="ECO:0007669"/>
    <property type="project" value="TreeGrafter"/>
</dbReference>
<dbReference type="GO" id="GO:0003684">
    <property type="term" value="F:damaged DNA binding"/>
    <property type="evidence" value="ECO:0007669"/>
    <property type="project" value="InterPro"/>
</dbReference>
<dbReference type="GO" id="GO:0003887">
    <property type="term" value="F:DNA-directed DNA polymerase activity"/>
    <property type="evidence" value="ECO:0007669"/>
    <property type="project" value="UniProtKB-UniRule"/>
</dbReference>
<dbReference type="GO" id="GO:0000287">
    <property type="term" value="F:magnesium ion binding"/>
    <property type="evidence" value="ECO:0007669"/>
    <property type="project" value="UniProtKB-UniRule"/>
</dbReference>
<dbReference type="GO" id="GO:0006261">
    <property type="term" value="P:DNA-templated DNA replication"/>
    <property type="evidence" value="ECO:0007669"/>
    <property type="project" value="UniProtKB-UniRule"/>
</dbReference>
<dbReference type="GO" id="GO:0042276">
    <property type="term" value="P:error-prone translesion synthesis"/>
    <property type="evidence" value="ECO:0007669"/>
    <property type="project" value="TreeGrafter"/>
</dbReference>
<dbReference type="GO" id="GO:0009432">
    <property type="term" value="P:SOS response"/>
    <property type="evidence" value="ECO:0007669"/>
    <property type="project" value="TreeGrafter"/>
</dbReference>
<dbReference type="CDD" id="cd03586">
    <property type="entry name" value="PolY_Pol_IV_kappa"/>
    <property type="match status" value="1"/>
</dbReference>
<dbReference type="FunFam" id="3.30.1490.100:FF:000004">
    <property type="entry name" value="DNA polymerase IV"/>
    <property type="match status" value="1"/>
</dbReference>
<dbReference type="FunFam" id="3.40.1170.60:FF:000001">
    <property type="entry name" value="DNA polymerase IV"/>
    <property type="match status" value="1"/>
</dbReference>
<dbReference type="Gene3D" id="3.30.70.270">
    <property type="match status" value="1"/>
</dbReference>
<dbReference type="Gene3D" id="3.40.1170.60">
    <property type="match status" value="1"/>
</dbReference>
<dbReference type="Gene3D" id="1.10.150.20">
    <property type="entry name" value="5' to 3' exonuclease, C-terminal subdomain"/>
    <property type="match status" value="1"/>
</dbReference>
<dbReference type="Gene3D" id="3.30.1490.100">
    <property type="entry name" value="DNA polymerase, Y-family, little finger domain"/>
    <property type="match status" value="1"/>
</dbReference>
<dbReference type="HAMAP" id="MF_01113">
    <property type="entry name" value="DNApol_IV"/>
    <property type="match status" value="1"/>
</dbReference>
<dbReference type="InterPro" id="IPR043502">
    <property type="entry name" value="DNA/RNA_pol_sf"/>
</dbReference>
<dbReference type="InterPro" id="IPR036775">
    <property type="entry name" value="DNA_pol_Y-fam_lit_finger_sf"/>
</dbReference>
<dbReference type="InterPro" id="IPR017961">
    <property type="entry name" value="DNA_pol_Y-fam_little_finger"/>
</dbReference>
<dbReference type="InterPro" id="IPR050116">
    <property type="entry name" value="DNA_polymerase-Y"/>
</dbReference>
<dbReference type="InterPro" id="IPR022880">
    <property type="entry name" value="DNApol_IV"/>
</dbReference>
<dbReference type="InterPro" id="IPR024728">
    <property type="entry name" value="PolY_HhH_motif"/>
</dbReference>
<dbReference type="InterPro" id="IPR043128">
    <property type="entry name" value="Rev_trsase/Diguanyl_cyclase"/>
</dbReference>
<dbReference type="InterPro" id="IPR001126">
    <property type="entry name" value="UmuC"/>
</dbReference>
<dbReference type="NCBIfam" id="NF002677">
    <property type="entry name" value="PRK02406.1"/>
    <property type="match status" value="1"/>
</dbReference>
<dbReference type="PANTHER" id="PTHR11076:SF33">
    <property type="entry name" value="DNA POLYMERASE KAPPA"/>
    <property type="match status" value="1"/>
</dbReference>
<dbReference type="PANTHER" id="PTHR11076">
    <property type="entry name" value="DNA REPAIR POLYMERASE UMUC / TRANSFERASE FAMILY MEMBER"/>
    <property type="match status" value="1"/>
</dbReference>
<dbReference type="Pfam" id="PF00817">
    <property type="entry name" value="IMS"/>
    <property type="match status" value="1"/>
</dbReference>
<dbReference type="Pfam" id="PF11799">
    <property type="entry name" value="IMS_C"/>
    <property type="match status" value="1"/>
</dbReference>
<dbReference type="Pfam" id="PF11798">
    <property type="entry name" value="IMS_HHH"/>
    <property type="match status" value="1"/>
</dbReference>
<dbReference type="SUPFAM" id="SSF56672">
    <property type="entry name" value="DNA/RNA polymerases"/>
    <property type="match status" value="1"/>
</dbReference>
<dbReference type="SUPFAM" id="SSF100879">
    <property type="entry name" value="Lesion bypass DNA polymerase (Y-family), little finger domain"/>
    <property type="match status" value="1"/>
</dbReference>
<dbReference type="PROSITE" id="PS50173">
    <property type="entry name" value="UMUC"/>
    <property type="match status" value="1"/>
</dbReference>
<keyword id="KW-0963">Cytoplasm</keyword>
<keyword id="KW-0227">DNA damage</keyword>
<keyword id="KW-0234">DNA repair</keyword>
<keyword id="KW-0235">DNA replication</keyword>
<keyword id="KW-0238">DNA-binding</keyword>
<keyword id="KW-0239">DNA-directed DNA polymerase</keyword>
<keyword id="KW-0460">Magnesium</keyword>
<keyword id="KW-0479">Metal-binding</keyword>
<keyword id="KW-0515">Mutator protein</keyword>
<keyword id="KW-0548">Nucleotidyltransferase</keyword>
<keyword id="KW-1185">Reference proteome</keyword>
<keyword id="KW-0808">Transferase</keyword>
<evidence type="ECO:0000255" key="1">
    <source>
        <dbReference type="HAMAP-Rule" id="MF_01113"/>
    </source>
</evidence>
<accession>Q5FSM8</accession>
<proteinExistence type="inferred from homology"/>